<reference key="1">
    <citation type="journal article" date="2004" name="Science">
        <title>The complete genome sequence of Propionibacterium acnes, a commensal of human skin.</title>
        <authorList>
            <person name="Brueggemann H."/>
            <person name="Henne A."/>
            <person name="Hoster F."/>
            <person name="Liesegang H."/>
            <person name="Wiezer A."/>
            <person name="Strittmatter A."/>
            <person name="Hujer S."/>
            <person name="Duerre P."/>
            <person name="Gottschalk G."/>
        </authorList>
    </citation>
    <scope>NUCLEOTIDE SEQUENCE [LARGE SCALE GENOMIC DNA]</scope>
    <source>
        <strain>DSM 16379 / KPA171202</strain>
    </source>
</reference>
<gene>
    <name evidence="1" type="primary">tilS</name>
    <name type="ordered locus">PPA0258</name>
</gene>
<protein>
    <recommendedName>
        <fullName evidence="1">tRNA(Ile)-lysidine synthase</fullName>
        <ecNumber evidence="1">6.3.4.19</ecNumber>
    </recommendedName>
    <alternativeName>
        <fullName evidence="1">tRNA(Ile)-2-lysyl-cytidine synthase</fullName>
    </alternativeName>
    <alternativeName>
        <fullName evidence="1">tRNA(Ile)-lysidine synthetase</fullName>
    </alternativeName>
</protein>
<name>TILS_CUTAK</name>
<feature type="chain" id="PRO_0000181744" description="tRNA(Ile)-lysidine synthase">
    <location>
        <begin position="1"/>
        <end position="311"/>
    </location>
</feature>
<feature type="binding site" evidence="1">
    <location>
        <begin position="32"/>
        <end position="37"/>
    </location>
    <ligand>
        <name>ATP</name>
        <dbReference type="ChEBI" id="CHEBI:30616"/>
    </ligand>
</feature>
<sequence length="311" mass="33758">MARRELGPAALAVAQAVERMVRGVDRFVVGCSGGPDSLALALASKWASRRCESGVRVVIVDHQLQQGSDEVAERTRDLLVRRGMDACVRRVDVDADDPDGPEAAARTARRAALLDVAGDEPVLLGHTRDDQAEQVLLSLARGSGATSLAGIRPRSGQFWHPLLEVRRAQTVQACREWEVEPWQDPHNGDPRFLRSRVRTELMPVMEEVLGPEVAASLARSATLLAGEDEVVARVARMWADEHGVKANELPGLRGVEVGLARRVVKEWLPQARMVHVDAVLGLLDGPGGAGVDVPGGRVEMRQGTLYLARRL</sequence>
<proteinExistence type="inferred from homology"/>
<dbReference type="EC" id="6.3.4.19" evidence="1"/>
<dbReference type="EMBL" id="AE017283">
    <property type="protein sequence ID" value="AAT82017.1"/>
    <property type="molecule type" value="Genomic_DNA"/>
</dbReference>
<dbReference type="RefSeq" id="WP_002518698.1">
    <property type="nucleotide sequence ID" value="NZ_CP025935.1"/>
</dbReference>
<dbReference type="SMR" id="Q6AB49"/>
<dbReference type="EnsemblBacteria" id="AAT82017">
    <property type="protein sequence ID" value="AAT82017"/>
    <property type="gene ID" value="PPA0258"/>
</dbReference>
<dbReference type="GeneID" id="92856248"/>
<dbReference type="KEGG" id="pac:PPA0258"/>
<dbReference type="eggNOG" id="COG0037">
    <property type="taxonomic scope" value="Bacteria"/>
</dbReference>
<dbReference type="HOGENOM" id="CLU_018869_1_0_11"/>
<dbReference type="Proteomes" id="UP000000603">
    <property type="component" value="Chromosome"/>
</dbReference>
<dbReference type="GO" id="GO:0005737">
    <property type="term" value="C:cytoplasm"/>
    <property type="evidence" value="ECO:0007669"/>
    <property type="project" value="UniProtKB-SubCell"/>
</dbReference>
<dbReference type="GO" id="GO:0005524">
    <property type="term" value="F:ATP binding"/>
    <property type="evidence" value="ECO:0007669"/>
    <property type="project" value="UniProtKB-UniRule"/>
</dbReference>
<dbReference type="GO" id="GO:0032267">
    <property type="term" value="F:tRNA(Ile)-lysidine synthase activity"/>
    <property type="evidence" value="ECO:0007669"/>
    <property type="project" value="UniProtKB-EC"/>
</dbReference>
<dbReference type="GO" id="GO:0006400">
    <property type="term" value="P:tRNA modification"/>
    <property type="evidence" value="ECO:0007669"/>
    <property type="project" value="UniProtKB-UniRule"/>
</dbReference>
<dbReference type="CDD" id="cd01992">
    <property type="entry name" value="TilS_N"/>
    <property type="match status" value="1"/>
</dbReference>
<dbReference type="Gene3D" id="3.40.50.620">
    <property type="entry name" value="HUPs"/>
    <property type="match status" value="1"/>
</dbReference>
<dbReference type="HAMAP" id="MF_01161">
    <property type="entry name" value="tRNA_Ile_lys_synt"/>
    <property type="match status" value="1"/>
</dbReference>
<dbReference type="InterPro" id="IPR014729">
    <property type="entry name" value="Rossmann-like_a/b/a_fold"/>
</dbReference>
<dbReference type="InterPro" id="IPR011063">
    <property type="entry name" value="TilS/TtcA_N"/>
</dbReference>
<dbReference type="InterPro" id="IPR012094">
    <property type="entry name" value="tRNA_Ile_lys_synt"/>
</dbReference>
<dbReference type="InterPro" id="IPR012795">
    <property type="entry name" value="tRNA_Ile_lys_synt_N"/>
</dbReference>
<dbReference type="NCBIfam" id="TIGR02432">
    <property type="entry name" value="lysidine_TilS_N"/>
    <property type="match status" value="1"/>
</dbReference>
<dbReference type="PANTHER" id="PTHR43033">
    <property type="entry name" value="TRNA(ILE)-LYSIDINE SYNTHASE-RELATED"/>
    <property type="match status" value="1"/>
</dbReference>
<dbReference type="PANTHER" id="PTHR43033:SF1">
    <property type="entry name" value="TRNA(ILE)-LYSIDINE SYNTHASE-RELATED"/>
    <property type="match status" value="1"/>
</dbReference>
<dbReference type="Pfam" id="PF01171">
    <property type="entry name" value="ATP_bind_3"/>
    <property type="match status" value="1"/>
</dbReference>
<dbReference type="SUPFAM" id="SSF52402">
    <property type="entry name" value="Adenine nucleotide alpha hydrolases-like"/>
    <property type="match status" value="1"/>
</dbReference>
<dbReference type="SUPFAM" id="SSF82829">
    <property type="entry name" value="MesJ substrate recognition domain-like"/>
    <property type="match status" value="1"/>
</dbReference>
<comment type="function">
    <text evidence="1">Ligates lysine onto the cytidine present at position 34 of the AUA codon-specific tRNA(Ile) that contains the anticodon CAU, in an ATP-dependent manner. Cytidine is converted to lysidine, thus changing the amino acid specificity of the tRNA from methionine to isoleucine.</text>
</comment>
<comment type="catalytic activity">
    <reaction evidence="1">
        <text>cytidine(34) in tRNA(Ile2) + L-lysine + ATP = lysidine(34) in tRNA(Ile2) + AMP + diphosphate + H(+)</text>
        <dbReference type="Rhea" id="RHEA:43744"/>
        <dbReference type="Rhea" id="RHEA-COMP:10625"/>
        <dbReference type="Rhea" id="RHEA-COMP:10670"/>
        <dbReference type="ChEBI" id="CHEBI:15378"/>
        <dbReference type="ChEBI" id="CHEBI:30616"/>
        <dbReference type="ChEBI" id="CHEBI:32551"/>
        <dbReference type="ChEBI" id="CHEBI:33019"/>
        <dbReference type="ChEBI" id="CHEBI:82748"/>
        <dbReference type="ChEBI" id="CHEBI:83665"/>
        <dbReference type="ChEBI" id="CHEBI:456215"/>
        <dbReference type="EC" id="6.3.4.19"/>
    </reaction>
</comment>
<comment type="subcellular location">
    <subcellularLocation>
        <location evidence="1">Cytoplasm</location>
    </subcellularLocation>
</comment>
<comment type="domain">
    <text>The N-terminal region contains the highly conserved SGGXDS motif, predicted to be a P-loop motif involved in ATP binding.</text>
</comment>
<comment type="similarity">
    <text evidence="1">Belongs to the tRNA(Ile)-lysidine synthase family.</text>
</comment>
<evidence type="ECO:0000255" key="1">
    <source>
        <dbReference type="HAMAP-Rule" id="MF_01161"/>
    </source>
</evidence>
<accession>Q6AB49</accession>
<organism>
    <name type="scientific">Cutibacterium acnes (strain DSM 16379 / KPA171202)</name>
    <name type="common">Propionibacterium acnes</name>
    <dbReference type="NCBI Taxonomy" id="267747"/>
    <lineage>
        <taxon>Bacteria</taxon>
        <taxon>Bacillati</taxon>
        <taxon>Actinomycetota</taxon>
        <taxon>Actinomycetes</taxon>
        <taxon>Propionibacteriales</taxon>
        <taxon>Propionibacteriaceae</taxon>
        <taxon>Cutibacterium</taxon>
    </lineage>
</organism>
<keyword id="KW-0067">ATP-binding</keyword>
<keyword id="KW-0963">Cytoplasm</keyword>
<keyword id="KW-0436">Ligase</keyword>
<keyword id="KW-0547">Nucleotide-binding</keyword>
<keyword id="KW-0819">tRNA processing</keyword>